<dbReference type="EC" id="2.7.8.29" evidence="1"/>
<dbReference type="EMBL" id="BC161401">
    <property type="protein sequence ID" value="AAI61401.1"/>
    <property type="molecule type" value="mRNA"/>
</dbReference>
<dbReference type="EMBL" id="BC166380">
    <property type="protein sequence ID" value="AAI66380.1"/>
    <property type="molecule type" value="mRNA"/>
</dbReference>
<dbReference type="RefSeq" id="NP_001120508.1">
    <property type="nucleotide sequence ID" value="NM_001127036.1"/>
</dbReference>
<dbReference type="SMR" id="B1H3H9"/>
<dbReference type="FunCoup" id="B1H3H9">
    <property type="interactions" value="1190"/>
</dbReference>
<dbReference type="STRING" id="8364.ENSXETP00000027085"/>
<dbReference type="GeneID" id="100145636"/>
<dbReference type="KEGG" id="xtr:100145636"/>
<dbReference type="AGR" id="Xenbase:XB-GENE-6455449"/>
<dbReference type="CTD" id="9791"/>
<dbReference type="Xenbase" id="XB-GENE-6455449">
    <property type="gene designation" value="ptdss1"/>
</dbReference>
<dbReference type="InParanoid" id="B1H3H9"/>
<dbReference type="OMA" id="LPNFWEC"/>
<dbReference type="OrthoDB" id="10265393at2759"/>
<dbReference type="Reactome" id="R-XTR-1483101">
    <property type="pathway name" value="Synthesis of PS"/>
</dbReference>
<dbReference type="UniPathway" id="UPA00948"/>
<dbReference type="Proteomes" id="UP000008143">
    <property type="component" value="Chromosome 6"/>
</dbReference>
<dbReference type="GO" id="GO:0005789">
    <property type="term" value="C:endoplasmic reticulum membrane"/>
    <property type="evidence" value="ECO:0007669"/>
    <property type="project" value="UniProtKB-SubCell"/>
</dbReference>
<dbReference type="GO" id="GO:0106258">
    <property type="term" value="F:L-serine-phosphatidylcholine phosphatidyltransferase activity"/>
    <property type="evidence" value="ECO:0007669"/>
    <property type="project" value="RHEA"/>
</dbReference>
<dbReference type="GO" id="GO:0106245">
    <property type="term" value="F:L-serine-phosphatidylethanolamine phosphatidyltransferase activity"/>
    <property type="evidence" value="ECO:0007669"/>
    <property type="project" value="UniProtKB-EC"/>
</dbReference>
<dbReference type="GO" id="GO:0006659">
    <property type="term" value="P:phosphatidylserine biosynthetic process"/>
    <property type="evidence" value="ECO:0007669"/>
    <property type="project" value="UniProtKB-UniPathway"/>
</dbReference>
<dbReference type="InterPro" id="IPR004277">
    <property type="entry name" value="PSS"/>
</dbReference>
<dbReference type="PANTHER" id="PTHR15362">
    <property type="entry name" value="PHOSPHATIDYLINOSITOL SYNTHASE"/>
    <property type="match status" value="1"/>
</dbReference>
<dbReference type="PANTHER" id="PTHR15362:SF15">
    <property type="entry name" value="PHOSPHATIDYLSERINE SYNTHASE 1"/>
    <property type="match status" value="1"/>
</dbReference>
<dbReference type="Pfam" id="PF03034">
    <property type="entry name" value="PSS"/>
    <property type="match status" value="1"/>
</dbReference>
<gene>
    <name type="primary">ptdss1</name>
</gene>
<feature type="chain" id="PRO_0000416033" description="Phosphatidylserine synthase 1">
    <location>
        <begin position="1"/>
        <end position="465"/>
    </location>
</feature>
<feature type="topological domain" description="Cytoplasmic" evidence="3">
    <location>
        <begin position="1"/>
        <end position="35"/>
    </location>
</feature>
<feature type="transmembrane region" description="Helical" evidence="3">
    <location>
        <begin position="36"/>
        <end position="56"/>
    </location>
</feature>
<feature type="topological domain" description="Lumenal" evidence="3">
    <location>
        <begin position="57"/>
        <end position="68"/>
    </location>
</feature>
<feature type="transmembrane region" description="Helical" evidence="3">
    <location>
        <begin position="69"/>
        <end position="89"/>
    </location>
</feature>
<feature type="topological domain" description="Cytoplasmic" evidence="3">
    <location>
        <begin position="90"/>
        <end position="102"/>
    </location>
</feature>
<feature type="transmembrane region" description="Helical" evidence="3">
    <location>
        <begin position="103"/>
        <end position="123"/>
    </location>
</feature>
<feature type="topological domain" description="Lumenal" evidence="3">
    <location>
        <begin position="124"/>
        <end position="186"/>
    </location>
</feature>
<feature type="transmembrane region" description="Helical" evidence="3">
    <location>
        <begin position="187"/>
        <end position="207"/>
    </location>
</feature>
<feature type="topological domain" description="Cytoplasmic" evidence="3">
    <location>
        <begin position="208"/>
        <end position="216"/>
    </location>
</feature>
<feature type="transmembrane region" description="Helical" evidence="3">
    <location>
        <begin position="217"/>
        <end position="237"/>
    </location>
</feature>
<feature type="topological domain" description="Lumenal" evidence="3">
    <location>
        <begin position="238"/>
        <end position="286"/>
    </location>
</feature>
<feature type="transmembrane region" description="Helical" evidence="3">
    <location>
        <begin position="287"/>
        <end position="307"/>
    </location>
</feature>
<feature type="topological domain" description="Cytoplasmic" evidence="3">
    <location>
        <begin position="308"/>
        <end position="319"/>
    </location>
</feature>
<feature type="transmembrane region" description="Helical" evidence="3">
    <location>
        <begin position="320"/>
        <end position="342"/>
    </location>
</feature>
<feature type="topological domain" description="Lumenal" evidence="3">
    <location>
        <begin position="343"/>
        <end position="355"/>
    </location>
</feature>
<feature type="transmembrane region" description="Helical" evidence="3">
    <location>
        <begin position="356"/>
        <end position="376"/>
    </location>
</feature>
<feature type="topological domain" description="Cytoplasmic" evidence="3">
    <location>
        <begin position="377"/>
        <end position="383"/>
    </location>
</feature>
<feature type="transmembrane region" description="Helical" evidence="3">
    <location>
        <begin position="384"/>
        <end position="404"/>
    </location>
</feature>
<feature type="topological domain" description="Lumenal" evidence="3">
    <location>
        <begin position="405"/>
        <end position="465"/>
    </location>
</feature>
<feature type="region of interest" description="Disordered" evidence="4">
    <location>
        <begin position="440"/>
        <end position="465"/>
    </location>
</feature>
<feature type="compositionally biased region" description="Basic residues" evidence="4">
    <location>
        <begin position="449"/>
        <end position="465"/>
    </location>
</feature>
<evidence type="ECO:0000250" key="1">
    <source>
        <dbReference type="UniProtKB" id="P48651"/>
    </source>
</evidence>
<evidence type="ECO:0000250" key="2">
    <source>
        <dbReference type="UniProtKB" id="Q99LH2"/>
    </source>
</evidence>
<evidence type="ECO:0000255" key="3"/>
<evidence type="ECO:0000256" key="4">
    <source>
        <dbReference type="SAM" id="MobiDB-lite"/>
    </source>
</evidence>
<evidence type="ECO:0000305" key="5"/>
<comment type="function">
    <text evidence="1">Catalyzes a base-exchange reaction in which the polar head group of phosphatidylethanolamine (PE) or phosphatidylcholine (PC) is replaced by L-serine (By similarity). Catalyzes mainly the conversion of phosphatidylcholine but also converts, in vitro and to a lesser extent, phosphatidylethanolamine (By similarity).</text>
</comment>
<comment type="catalytic activity">
    <reaction evidence="1">
        <text>a 1,2-diacyl-sn-glycero-3-phosphoethanolamine + L-serine = a 1,2-diacyl-sn-glycero-3-phospho-L-serine + ethanolamine</text>
        <dbReference type="Rhea" id="RHEA:27606"/>
        <dbReference type="ChEBI" id="CHEBI:33384"/>
        <dbReference type="ChEBI" id="CHEBI:57262"/>
        <dbReference type="ChEBI" id="CHEBI:57603"/>
        <dbReference type="ChEBI" id="CHEBI:64612"/>
        <dbReference type="EC" id="2.7.8.29"/>
    </reaction>
    <physiologicalReaction direction="left-to-right" evidence="1">
        <dbReference type="Rhea" id="RHEA:27607"/>
    </physiologicalReaction>
</comment>
<comment type="catalytic activity">
    <reaction evidence="1">
        <text>a 1,2-diacyl-sn-glycero-3-phosphocholine + L-serine = a 1,2-diacyl-sn-glycero-3-phospho-L-serine + choline</text>
        <dbReference type="Rhea" id="RHEA:45088"/>
        <dbReference type="ChEBI" id="CHEBI:15354"/>
        <dbReference type="ChEBI" id="CHEBI:33384"/>
        <dbReference type="ChEBI" id="CHEBI:57262"/>
        <dbReference type="ChEBI" id="CHEBI:57643"/>
    </reaction>
    <physiologicalReaction direction="left-to-right" evidence="1">
        <dbReference type="Rhea" id="RHEA:45089"/>
    </physiologicalReaction>
</comment>
<comment type="pathway">
    <text>Phospholipid metabolism; phosphatidylserine biosynthesis.</text>
</comment>
<comment type="subcellular location">
    <subcellularLocation>
        <location evidence="2">Endoplasmic reticulum membrane</location>
        <topology evidence="2">Multi-pass membrane protein</topology>
    </subcellularLocation>
    <text evidence="2">Highly enriched in the mitochondria-associated membrane (MAM).</text>
</comment>
<comment type="similarity">
    <text evidence="5">Belongs to the phosphatidyl serine synthase family.</text>
</comment>
<reference key="1">
    <citation type="submission" date="2008-03" db="EMBL/GenBank/DDBJ databases">
        <authorList>
            <consortium name="NIH - Xenopus Gene Collection (XGC) project"/>
        </authorList>
    </citation>
    <scope>NUCLEOTIDE SEQUENCE [LARGE SCALE MRNA]</scope>
    <source>
        <tissue>Testis</tissue>
    </source>
</reference>
<proteinExistence type="evidence at transcript level"/>
<organism>
    <name type="scientific">Xenopus tropicalis</name>
    <name type="common">Western clawed frog</name>
    <name type="synonym">Silurana tropicalis</name>
    <dbReference type="NCBI Taxonomy" id="8364"/>
    <lineage>
        <taxon>Eukaryota</taxon>
        <taxon>Metazoa</taxon>
        <taxon>Chordata</taxon>
        <taxon>Craniata</taxon>
        <taxon>Vertebrata</taxon>
        <taxon>Euteleostomi</taxon>
        <taxon>Amphibia</taxon>
        <taxon>Batrachia</taxon>
        <taxon>Anura</taxon>
        <taxon>Pipoidea</taxon>
        <taxon>Pipidae</taxon>
        <taxon>Xenopodinae</taxon>
        <taxon>Xenopus</taxon>
        <taxon>Silurana</taxon>
    </lineage>
</organism>
<sequence>MVSAMRSRTLSKDDVNYKMHFRMINEQQVEDITIDFFYKPHTITLLTFTTVSLMYFAFTRENTSQEDNIWKGILSVIFFFLIISVLAFPNGPFTRPHPAIWRMVFGLSVLYFLFLVFLLFLNVEQVKAVMYWLDPNLRYATRESDVMEYAVNCHVITWERILSHFDIFAFGHFWGWAMKALLIRSYGLCWTISITWEMTELFFMHLLPNFAECWWDQVILDILLCNGGGILLGMVVCRFLEMRTYHWASFKDIHTTTGKIKRAVLQFTPASWIYVRWFDPKSSFQRVAGVYLFMIIWQLTELNTFFLKHIFVFQASHPLSWCRILFIGIITAPTVRQYYAYLTDTQCKRVGTQCWVFGAIAFLEATVCIKFGQDLFSKTHLLYVFLWLFSVAVITFLCLYGMVWYADYCGQREKTFSECEDSTYNTDIPWHHIDKPVEAPVKQNEGTSRRKNRHKGKVTNGVGKK</sequence>
<keyword id="KW-0256">Endoplasmic reticulum</keyword>
<keyword id="KW-0444">Lipid biosynthesis</keyword>
<keyword id="KW-0443">Lipid metabolism</keyword>
<keyword id="KW-0472">Membrane</keyword>
<keyword id="KW-0594">Phospholipid biosynthesis</keyword>
<keyword id="KW-1208">Phospholipid metabolism</keyword>
<keyword id="KW-1185">Reference proteome</keyword>
<keyword id="KW-0808">Transferase</keyword>
<keyword id="KW-0812">Transmembrane</keyword>
<keyword id="KW-1133">Transmembrane helix</keyword>
<accession>B1H3H9</accession>
<name>PTSS1_XENTR</name>
<protein>
    <recommendedName>
        <fullName>Phosphatidylserine synthase 1</fullName>
        <shortName>PSS-1</shortName>
        <shortName>PtdSer synthase 1</shortName>
        <ecNumber evidence="1">2.7.8.29</ecNumber>
    </recommendedName>
</protein>